<dbReference type="EC" id="2.7.2.1" evidence="1"/>
<dbReference type="EMBL" id="L17320">
    <property type="protein sequence ID" value="AAC36857.1"/>
    <property type="molecule type" value="Unassigned_DNA"/>
</dbReference>
<dbReference type="EMBL" id="AF008220">
    <property type="protein sequence ID" value="AAC00318.1"/>
    <property type="molecule type" value="Genomic_DNA"/>
</dbReference>
<dbReference type="EMBL" id="AL009126">
    <property type="protein sequence ID" value="CAB14925.1"/>
    <property type="molecule type" value="Genomic_DNA"/>
</dbReference>
<dbReference type="PIR" id="B49935">
    <property type="entry name" value="B49935"/>
</dbReference>
<dbReference type="RefSeq" id="NP_390825.1">
    <property type="nucleotide sequence ID" value="NC_000964.3"/>
</dbReference>
<dbReference type="RefSeq" id="WP_003223511.1">
    <property type="nucleotide sequence ID" value="NZ_OZ025638.1"/>
</dbReference>
<dbReference type="SMR" id="P37877"/>
<dbReference type="FunCoup" id="P37877">
    <property type="interactions" value="607"/>
</dbReference>
<dbReference type="IntAct" id="P37877">
    <property type="interactions" value="1"/>
</dbReference>
<dbReference type="MINT" id="P37877"/>
<dbReference type="STRING" id="224308.BSU29470"/>
<dbReference type="jPOST" id="P37877"/>
<dbReference type="PaxDb" id="224308-BSU29470"/>
<dbReference type="EnsemblBacteria" id="CAB14925">
    <property type="protein sequence ID" value="CAB14925"/>
    <property type="gene ID" value="BSU_29470"/>
</dbReference>
<dbReference type="GeneID" id="937347"/>
<dbReference type="KEGG" id="bsu:BSU29470"/>
<dbReference type="PATRIC" id="fig|224308.179.peg.3201"/>
<dbReference type="eggNOG" id="COG0282">
    <property type="taxonomic scope" value="Bacteria"/>
</dbReference>
<dbReference type="InParanoid" id="P37877"/>
<dbReference type="OrthoDB" id="9802453at2"/>
<dbReference type="PhylomeDB" id="P37877"/>
<dbReference type="BioCyc" id="BSUB:BSU29470-MONOMER"/>
<dbReference type="UniPathway" id="UPA00340">
    <property type="reaction ID" value="UER00458"/>
</dbReference>
<dbReference type="PRO" id="PR:P37877"/>
<dbReference type="Proteomes" id="UP000001570">
    <property type="component" value="Chromosome"/>
</dbReference>
<dbReference type="GO" id="GO:0005737">
    <property type="term" value="C:cytoplasm"/>
    <property type="evidence" value="ECO:0007669"/>
    <property type="project" value="UniProtKB-SubCell"/>
</dbReference>
<dbReference type="GO" id="GO:0008776">
    <property type="term" value="F:acetate kinase activity"/>
    <property type="evidence" value="ECO:0000318"/>
    <property type="project" value="GO_Central"/>
</dbReference>
<dbReference type="GO" id="GO:0005524">
    <property type="term" value="F:ATP binding"/>
    <property type="evidence" value="ECO:0007669"/>
    <property type="project" value="UniProtKB-KW"/>
</dbReference>
<dbReference type="GO" id="GO:0000287">
    <property type="term" value="F:magnesium ion binding"/>
    <property type="evidence" value="ECO:0007669"/>
    <property type="project" value="UniProtKB-UniRule"/>
</dbReference>
<dbReference type="GO" id="GO:0006083">
    <property type="term" value="P:acetate metabolic process"/>
    <property type="evidence" value="ECO:0000318"/>
    <property type="project" value="GO_Central"/>
</dbReference>
<dbReference type="GO" id="GO:0006085">
    <property type="term" value="P:acetyl-CoA biosynthetic process"/>
    <property type="evidence" value="ECO:0007669"/>
    <property type="project" value="UniProtKB-UniRule"/>
</dbReference>
<dbReference type="CDD" id="cd24010">
    <property type="entry name" value="ASKHA_NBD_AcK_PK"/>
    <property type="match status" value="1"/>
</dbReference>
<dbReference type="Gene3D" id="3.30.420.40">
    <property type="match status" value="2"/>
</dbReference>
<dbReference type="HAMAP" id="MF_00020">
    <property type="entry name" value="Acetate_kinase"/>
    <property type="match status" value="1"/>
</dbReference>
<dbReference type="InterPro" id="IPR004372">
    <property type="entry name" value="Ac/propionate_kinase"/>
</dbReference>
<dbReference type="InterPro" id="IPR000890">
    <property type="entry name" value="Aliphatic_acid_kin_short-chain"/>
</dbReference>
<dbReference type="InterPro" id="IPR023865">
    <property type="entry name" value="Aliphatic_acid_kinase_CS"/>
</dbReference>
<dbReference type="InterPro" id="IPR043129">
    <property type="entry name" value="ATPase_NBD"/>
</dbReference>
<dbReference type="NCBIfam" id="TIGR00016">
    <property type="entry name" value="ackA"/>
    <property type="match status" value="1"/>
</dbReference>
<dbReference type="PANTHER" id="PTHR21060">
    <property type="entry name" value="ACETATE KINASE"/>
    <property type="match status" value="1"/>
</dbReference>
<dbReference type="PANTHER" id="PTHR21060:SF15">
    <property type="entry name" value="ACETATE KINASE-RELATED"/>
    <property type="match status" value="1"/>
</dbReference>
<dbReference type="Pfam" id="PF00871">
    <property type="entry name" value="Acetate_kinase"/>
    <property type="match status" value="1"/>
</dbReference>
<dbReference type="PIRSF" id="PIRSF000722">
    <property type="entry name" value="Acetate_prop_kin"/>
    <property type="match status" value="1"/>
</dbReference>
<dbReference type="PRINTS" id="PR00471">
    <property type="entry name" value="ACETATEKNASE"/>
</dbReference>
<dbReference type="SUPFAM" id="SSF53067">
    <property type="entry name" value="Actin-like ATPase domain"/>
    <property type="match status" value="2"/>
</dbReference>
<dbReference type="PROSITE" id="PS01075">
    <property type="entry name" value="ACETATE_KINASE_1"/>
    <property type="match status" value="1"/>
</dbReference>
<dbReference type="PROSITE" id="PS01076">
    <property type="entry name" value="ACETATE_KINASE_2"/>
    <property type="match status" value="1"/>
</dbReference>
<feature type="chain" id="PRO_0000107534" description="Acetate kinase">
    <location>
        <begin position="1"/>
        <end position="395"/>
    </location>
</feature>
<feature type="active site" description="Proton donor/acceptor" evidence="1">
    <location>
        <position position="146"/>
    </location>
</feature>
<feature type="binding site" evidence="1">
    <location>
        <position position="8"/>
    </location>
    <ligand>
        <name>Mg(2+)</name>
        <dbReference type="ChEBI" id="CHEBI:18420"/>
    </ligand>
</feature>
<feature type="binding site" evidence="1">
    <location>
        <position position="15"/>
    </location>
    <ligand>
        <name>ATP</name>
        <dbReference type="ChEBI" id="CHEBI:30616"/>
    </ligand>
</feature>
<feature type="binding site" evidence="1">
    <location>
        <position position="89"/>
    </location>
    <ligand>
        <name>substrate</name>
    </ligand>
</feature>
<feature type="binding site" evidence="1">
    <location>
        <begin position="206"/>
        <end position="210"/>
    </location>
    <ligand>
        <name>ATP</name>
        <dbReference type="ChEBI" id="CHEBI:30616"/>
    </ligand>
</feature>
<feature type="binding site" evidence="1">
    <location>
        <begin position="281"/>
        <end position="283"/>
    </location>
    <ligand>
        <name>ATP</name>
        <dbReference type="ChEBI" id="CHEBI:30616"/>
    </ligand>
</feature>
<feature type="binding site" evidence="1">
    <location>
        <begin position="329"/>
        <end position="333"/>
    </location>
    <ligand>
        <name>ATP</name>
        <dbReference type="ChEBI" id="CHEBI:30616"/>
    </ligand>
</feature>
<feature type="binding site" evidence="1">
    <location>
        <position position="382"/>
    </location>
    <ligand>
        <name>Mg(2+)</name>
        <dbReference type="ChEBI" id="CHEBI:18420"/>
    </ligand>
</feature>
<feature type="site" description="Transition state stabilizer" evidence="1">
    <location>
        <position position="178"/>
    </location>
</feature>
<feature type="site" description="Transition state stabilizer" evidence="1">
    <location>
        <position position="239"/>
    </location>
</feature>
<keyword id="KW-0067">ATP-binding</keyword>
<keyword id="KW-0963">Cytoplasm</keyword>
<keyword id="KW-0418">Kinase</keyword>
<keyword id="KW-0460">Magnesium</keyword>
<keyword id="KW-0479">Metal-binding</keyword>
<keyword id="KW-0547">Nucleotide-binding</keyword>
<keyword id="KW-1185">Reference proteome</keyword>
<keyword id="KW-0808">Transferase</keyword>
<protein>
    <recommendedName>
        <fullName evidence="1">Acetate kinase</fullName>
        <ecNumber evidence="1">2.7.2.1</ecNumber>
    </recommendedName>
    <alternativeName>
        <fullName evidence="1">Acetokinase</fullName>
    </alternativeName>
</protein>
<gene>
    <name evidence="1" type="primary">ackA</name>
    <name type="ordered locus">BSU29470</name>
</gene>
<reference key="1">
    <citation type="journal article" date="1993" name="J. Bacteriol.">
        <title>Regulation of the Bacillus subtilis acetate kinase gene by CcpA.</title>
        <authorList>
            <person name="Grundy F.J."/>
            <person name="Waters D.A."/>
            <person name="Allen S.H.G."/>
            <person name="Henkin T.M."/>
        </authorList>
    </citation>
    <scope>NUCLEOTIDE SEQUENCE [GENOMIC DNA]</scope>
    <scope>FUNCTION</scope>
    <scope>CATALYTIC ACTIVITY</scope>
    <scope>ACTIVITY REGULATION</scope>
    <source>
        <strain>168</strain>
    </source>
</reference>
<reference key="2">
    <citation type="journal article" date="1997" name="Microbiology">
        <title>Sequencing and functional annotation of the Bacillus subtilis genes in the 200 kb rrnB-dnaB region.</title>
        <authorList>
            <person name="Lapidus A."/>
            <person name="Galleron N."/>
            <person name="Sorokin A."/>
            <person name="Ehrlich S.D."/>
        </authorList>
    </citation>
    <scope>NUCLEOTIDE SEQUENCE [GENOMIC DNA]</scope>
    <source>
        <strain>168</strain>
    </source>
</reference>
<reference key="3">
    <citation type="journal article" date="1997" name="Nature">
        <title>The complete genome sequence of the Gram-positive bacterium Bacillus subtilis.</title>
        <authorList>
            <person name="Kunst F."/>
            <person name="Ogasawara N."/>
            <person name="Moszer I."/>
            <person name="Albertini A.M."/>
            <person name="Alloni G."/>
            <person name="Azevedo V."/>
            <person name="Bertero M.G."/>
            <person name="Bessieres P."/>
            <person name="Bolotin A."/>
            <person name="Borchert S."/>
            <person name="Borriss R."/>
            <person name="Boursier L."/>
            <person name="Brans A."/>
            <person name="Braun M."/>
            <person name="Brignell S.C."/>
            <person name="Bron S."/>
            <person name="Brouillet S."/>
            <person name="Bruschi C.V."/>
            <person name="Caldwell B."/>
            <person name="Capuano V."/>
            <person name="Carter N.M."/>
            <person name="Choi S.-K."/>
            <person name="Codani J.-J."/>
            <person name="Connerton I.F."/>
            <person name="Cummings N.J."/>
            <person name="Daniel R.A."/>
            <person name="Denizot F."/>
            <person name="Devine K.M."/>
            <person name="Duesterhoeft A."/>
            <person name="Ehrlich S.D."/>
            <person name="Emmerson P.T."/>
            <person name="Entian K.-D."/>
            <person name="Errington J."/>
            <person name="Fabret C."/>
            <person name="Ferrari E."/>
            <person name="Foulger D."/>
            <person name="Fritz C."/>
            <person name="Fujita M."/>
            <person name="Fujita Y."/>
            <person name="Fuma S."/>
            <person name="Galizzi A."/>
            <person name="Galleron N."/>
            <person name="Ghim S.-Y."/>
            <person name="Glaser P."/>
            <person name="Goffeau A."/>
            <person name="Golightly E.J."/>
            <person name="Grandi G."/>
            <person name="Guiseppi G."/>
            <person name="Guy B.J."/>
            <person name="Haga K."/>
            <person name="Haiech J."/>
            <person name="Harwood C.R."/>
            <person name="Henaut A."/>
            <person name="Hilbert H."/>
            <person name="Holsappel S."/>
            <person name="Hosono S."/>
            <person name="Hullo M.-F."/>
            <person name="Itaya M."/>
            <person name="Jones L.-M."/>
            <person name="Joris B."/>
            <person name="Karamata D."/>
            <person name="Kasahara Y."/>
            <person name="Klaerr-Blanchard M."/>
            <person name="Klein C."/>
            <person name="Kobayashi Y."/>
            <person name="Koetter P."/>
            <person name="Koningstein G."/>
            <person name="Krogh S."/>
            <person name="Kumano M."/>
            <person name="Kurita K."/>
            <person name="Lapidus A."/>
            <person name="Lardinois S."/>
            <person name="Lauber J."/>
            <person name="Lazarevic V."/>
            <person name="Lee S.-M."/>
            <person name="Levine A."/>
            <person name="Liu H."/>
            <person name="Masuda S."/>
            <person name="Mauel C."/>
            <person name="Medigue C."/>
            <person name="Medina N."/>
            <person name="Mellado R.P."/>
            <person name="Mizuno M."/>
            <person name="Moestl D."/>
            <person name="Nakai S."/>
            <person name="Noback M."/>
            <person name="Noone D."/>
            <person name="O'Reilly M."/>
            <person name="Ogawa K."/>
            <person name="Ogiwara A."/>
            <person name="Oudega B."/>
            <person name="Park S.-H."/>
            <person name="Parro V."/>
            <person name="Pohl T.M."/>
            <person name="Portetelle D."/>
            <person name="Porwollik S."/>
            <person name="Prescott A.M."/>
            <person name="Presecan E."/>
            <person name="Pujic P."/>
            <person name="Purnelle B."/>
            <person name="Rapoport G."/>
            <person name="Rey M."/>
            <person name="Reynolds S."/>
            <person name="Rieger M."/>
            <person name="Rivolta C."/>
            <person name="Rocha E."/>
            <person name="Roche B."/>
            <person name="Rose M."/>
            <person name="Sadaie Y."/>
            <person name="Sato T."/>
            <person name="Scanlan E."/>
            <person name="Schleich S."/>
            <person name="Schroeter R."/>
            <person name="Scoffone F."/>
            <person name="Sekiguchi J."/>
            <person name="Sekowska A."/>
            <person name="Seror S.J."/>
            <person name="Serror P."/>
            <person name="Shin B.-S."/>
            <person name="Soldo B."/>
            <person name="Sorokin A."/>
            <person name="Tacconi E."/>
            <person name="Takagi T."/>
            <person name="Takahashi H."/>
            <person name="Takemaru K."/>
            <person name="Takeuchi M."/>
            <person name="Tamakoshi A."/>
            <person name="Tanaka T."/>
            <person name="Terpstra P."/>
            <person name="Tognoni A."/>
            <person name="Tosato V."/>
            <person name="Uchiyama S."/>
            <person name="Vandenbol M."/>
            <person name="Vannier F."/>
            <person name="Vassarotti A."/>
            <person name="Viari A."/>
            <person name="Wambutt R."/>
            <person name="Wedler E."/>
            <person name="Wedler H."/>
            <person name="Weitzenegger T."/>
            <person name="Winters P."/>
            <person name="Wipat A."/>
            <person name="Yamamoto H."/>
            <person name="Yamane K."/>
            <person name="Yasumoto K."/>
            <person name="Yata K."/>
            <person name="Yoshida K."/>
            <person name="Yoshikawa H.-F."/>
            <person name="Zumstein E."/>
            <person name="Yoshikawa H."/>
            <person name="Danchin A."/>
        </authorList>
    </citation>
    <scope>NUCLEOTIDE SEQUENCE [LARGE SCALE GENOMIC DNA]</scope>
    <source>
        <strain>168</strain>
    </source>
</reference>
<name>ACKA_BACSU</name>
<accession>P37877</accession>
<comment type="function">
    <text evidence="1 2">Catalyzes the formation of acetyl phosphate from acetate and ATP. Can also catalyze the reverse reaction. Appears to favor the formation of acetate. Involved in the secretion of excess carbohydrate.</text>
</comment>
<comment type="catalytic activity">
    <reaction evidence="1 2">
        <text>acetate + ATP = acetyl phosphate + ADP</text>
        <dbReference type="Rhea" id="RHEA:11352"/>
        <dbReference type="ChEBI" id="CHEBI:22191"/>
        <dbReference type="ChEBI" id="CHEBI:30089"/>
        <dbReference type="ChEBI" id="CHEBI:30616"/>
        <dbReference type="ChEBI" id="CHEBI:456216"/>
        <dbReference type="EC" id="2.7.2.1"/>
    </reaction>
</comment>
<comment type="cofactor">
    <cofactor evidence="1">
        <name>Mg(2+)</name>
        <dbReference type="ChEBI" id="CHEBI:18420"/>
    </cofactor>
    <cofactor evidence="1">
        <name>Mn(2+)</name>
        <dbReference type="ChEBI" id="CHEBI:29035"/>
    </cofactor>
    <text evidence="1">Mg(2+). Can also accept Mn(2+).</text>
</comment>
<comment type="activity regulation">
    <text evidence="2">Induced by glucose excess, the induction may be mediated by CcpA transcriptional regulator.</text>
</comment>
<comment type="pathway">
    <text evidence="1">Metabolic intermediate biosynthesis; acetyl-CoA biosynthesis; acetyl-CoA from acetate: step 1/2.</text>
</comment>
<comment type="subunit">
    <text evidence="1">Homodimer.</text>
</comment>
<comment type="subcellular location">
    <subcellularLocation>
        <location evidence="1">Cytoplasm</location>
    </subcellularLocation>
</comment>
<comment type="similarity">
    <text evidence="1">Belongs to the acetokinase family.</text>
</comment>
<evidence type="ECO:0000255" key="1">
    <source>
        <dbReference type="HAMAP-Rule" id="MF_00020"/>
    </source>
</evidence>
<evidence type="ECO:0000269" key="2">
    <source>
    </source>
</evidence>
<proteinExistence type="evidence at protein level"/>
<sequence>MSKIIAINAGSSSLKFQLFEMPSETVLTKGLVERIGIADSVFTISVNGEKNTEVTDIPDHAVAVKMLLNKLTEFGIIKDLNEIDGIGHRVVHGGEKFSDSVLLTDETIKEIEDISELAPLHNPANIVGIKAFKEVLPNVPAVAVFDTAFHQTMPEQSYLYSLPYEYYEKFGIRKYGFHGTSHKYVTERAAELLGRPLKDLRLISCHLGNGASIAAVEGGKSIDTSMGFTPLAGVAMGTRSGNIDPALIPYIMEKTGQTADEVLNTLNKKSGLLGISGFSSDLRDIVEATKEGNERAETALEVFASRIHKYIGSYAARMSGVDAIIFTAGIGENSVEVRERVLRGLEFMGVYWDPALNNVRGEEAFISYPHSPVKVMIIPTDEEVMIARDVVRLAK</sequence>
<organism>
    <name type="scientific">Bacillus subtilis (strain 168)</name>
    <dbReference type="NCBI Taxonomy" id="224308"/>
    <lineage>
        <taxon>Bacteria</taxon>
        <taxon>Bacillati</taxon>
        <taxon>Bacillota</taxon>
        <taxon>Bacilli</taxon>
        <taxon>Bacillales</taxon>
        <taxon>Bacillaceae</taxon>
        <taxon>Bacillus</taxon>
    </lineage>
</organism>